<reference key="1">
    <citation type="submission" date="2008-03" db="EMBL/GenBank/DDBJ databases">
        <title>Complete sequence of chromosome of Methylobacterium radiotolerans JCM 2831.</title>
        <authorList>
            <consortium name="US DOE Joint Genome Institute"/>
            <person name="Copeland A."/>
            <person name="Lucas S."/>
            <person name="Lapidus A."/>
            <person name="Glavina del Rio T."/>
            <person name="Dalin E."/>
            <person name="Tice H."/>
            <person name="Bruce D."/>
            <person name="Goodwin L."/>
            <person name="Pitluck S."/>
            <person name="Kiss H."/>
            <person name="Brettin T."/>
            <person name="Detter J.C."/>
            <person name="Han C."/>
            <person name="Kuske C.R."/>
            <person name="Schmutz J."/>
            <person name="Larimer F."/>
            <person name="Land M."/>
            <person name="Hauser L."/>
            <person name="Kyrpides N."/>
            <person name="Mikhailova N."/>
            <person name="Marx C.J."/>
            <person name="Richardson P."/>
        </authorList>
    </citation>
    <scope>NUCLEOTIDE SEQUENCE [LARGE SCALE GENOMIC DNA]</scope>
    <source>
        <strain>ATCC 27329 / DSM 1819 / JCM 2831 / NBRC 15690 / NCIMB 10815 / 0-1</strain>
    </source>
</reference>
<dbReference type="EMBL" id="CP001001">
    <property type="protein sequence ID" value="ACB27072.1"/>
    <property type="molecule type" value="Genomic_DNA"/>
</dbReference>
<dbReference type="RefSeq" id="WP_003601373.1">
    <property type="nucleotide sequence ID" value="NC_010505.1"/>
</dbReference>
<dbReference type="SMR" id="B1LV66"/>
<dbReference type="STRING" id="426355.Mrad2831_5115"/>
<dbReference type="GeneID" id="96602163"/>
<dbReference type="KEGG" id="mrd:Mrad2831_5115"/>
<dbReference type="eggNOG" id="COG0333">
    <property type="taxonomic scope" value="Bacteria"/>
</dbReference>
<dbReference type="HOGENOM" id="CLU_129084_2_2_5"/>
<dbReference type="OrthoDB" id="9801927at2"/>
<dbReference type="Proteomes" id="UP000006589">
    <property type="component" value="Chromosome"/>
</dbReference>
<dbReference type="GO" id="GO:0015934">
    <property type="term" value="C:large ribosomal subunit"/>
    <property type="evidence" value="ECO:0007669"/>
    <property type="project" value="InterPro"/>
</dbReference>
<dbReference type="GO" id="GO:0003735">
    <property type="term" value="F:structural constituent of ribosome"/>
    <property type="evidence" value="ECO:0007669"/>
    <property type="project" value="InterPro"/>
</dbReference>
<dbReference type="GO" id="GO:0006412">
    <property type="term" value="P:translation"/>
    <property type="evidence" value="ECO:0007669"/>
    <property type="project" value="UniProtKB-UniRule"/>
</dbReference>
<dbReference type="Gene3D" id="1.20.5.640">
    <property type="entry name" value="Single helix bin"/>
    <property type="match status" value="1"/>
</dbReference>
<dbReference type="HAMAP" id="MF_00340">
    <property type="entry name" value="Ribosomal_bL32"/>
    <property type="match status" value="1"/>
</dbReference>
<dbReference type="InterPro" id="IPR002677">
    <property type="entry name" value="Ribosomal_bL32"/>
</dbReference>
<dbReference type="InterPro" id="IPR044957">
    <property type="entry name" value="Ribosomal_bL32_bact"/>
</dbReference>
<dbReference type="InterPro" id="IPR011332">
    <property type="entry name" value="Ribosomal_zn-bd"/>
</dbReference>
<dbReference type="NCBIfam" id="TIGR01031">
    <property type="entry name" value="rpmF_bact"/>
    <property type="match status" value="1"/>
</dbReference>
<dbReference type="PANTHER" id="PTHR35534">
    <property type="entry name" value="50S RIBOSOMAL PROTEIN L32"/>
    <property type="match status" value="1"/>
</dbReference>
<dbReference type="PANTHER" id="PTHR35534:SF1">
    <property type="entry name" value="LARGE RIBOSOMAL SUBUNIT PROTEIN BL32"/>
    <property type="match status" value="1"/>
</dbReference>
<dbReference type="Pfam" id="PF01783">
    <property type="entry name" value="Ribosomal_L32p"/>
    <property type="match status" value="1"/>
</dbReference>
<dbReference type="SUPFAM" id="SSF57829">
    <property type="entry name" value="Zn-binding ribosomal proteins"/>
    <property type="match status" value="1"/>
</dbReference>
<feature type="chain" id="PRO_1000120143" description="Large ribosomal subunit protein bL32">
    <location>
        <begin position="1"/>
        <end position="62"/>
    </location>
</feature>
<feature type="region of interest" description="Disordered" evidence="2">
    <location>
        <begin position="1"/>
        <end position="44"/>
    </location>
</feature>
<feature type="compositionally biased region" description="Basic residues" evidence="2">
    <location>
        <begin position="1"/>
        <end position="16"/>
    </location>
</feature>
<feature type="compositionally biased region" description="Basic and acidic residues" evidence="2">
    <location>
        <begin position="28"/>
        <end position="44"/>
    </location>
</feature>
<proteinExistence type="inferred from homology"/>
<organism>
    <name type="scientific">Methylobacterium radiotolerans (strain ATCC 27329 / DSM 1819 / JCM 2831 / NBRC 15690 / NCIMB 10815 / 0-1)</name>
    <dbReference type="NCBI Taxonomy" id="426355"/>
    <lineage>
        <taxon>Bacteria</taxon>
        <taxon>Pseudomonadati</taxon>
        <taxon>Pseudomonadota</taxon>
        <taxon>Alphaproteobacteria</taxon>
        <taxon>Hyphomicrobiales</taxon>
        <taxon>Methylobacteriaceae</taxon>
        <taxon>Methylobacterium</taxon>
    </lineage>
</organism>
<gene>
    <name evidence="1" type="primary">rpmF</name>
    <name type="ordered locus">Mrad2831_5115</name>
</gene>
<protein>
    <recommendedName>
        <fullName evidence="1">Large ribosomal subunit protein bL32</fullName>
    </recommendedName>
    <alternativeName>
        <fullName evidence="3">50S ribosomal protein L32</fullName>
    </alternativeName>
</protein>
<accession>B1LV66</accession>
<keyword id="KW-0687">Ribonucleoprotein</keyword>
<keyword id="KW-0689">Ribosomal protein</keyword>
<sequence length="62" mass="7035">MAVPKRKTSPSRRGMRRSADALKAPTYVEDKDSGELRRPHHIDLKTGMYRGRQVLKVKSAEA</sequence>
<evidence type="ECO:0000255" key="1">
    <source>
        <dbReference type="HAMAP-Rule" id="MF_00340"/>
    </source>
</evidence>
<evidence type="ECO:0000256" key="2">
    <source>
        <dbReference type="SAM" id="MobiDB-lite"/>
    </source>
</evidence>
<evidence type="ECO:0000305" key="3"/>
<comment type="similarity">
    <text evidence="1">Belongs to the bacterial ribosomal protein bL32 family.</text>
</comment>
<name>RL32_METRJ</name>